<organism>
    <name type="scientific">Bartonella bacilliformis (strain ATCC 35685 / KC583 / Herrer 020/F12,63)</name>
    <dbReference type="NCBI Taxonomy" id="360095"/>
    <lineage>
        <taxon>Bacteria</taxon>
        <taxon>Pseudomonadati</taxon>
        <taxon>Pseudomonadota</taxon>
        <taxon>Alphaproteobacteria</taxon>
        <taxon>Hyphomicrobiales</taxon>
        <taxon>Bartonellaceae</taxon>
        <taxon>Bartonella</taxon>
    </lineage>
</organism>
<sequence length="192" mass="21164">MRIILLGPPGAGKGTQARMLMERYNISQLSTGDMLREAIEKETEIGKQAKIFIESGALVPDFVVNQIVSDRIGEGDCVSGFILDGYPRTVGQAEALQRILQSKNMQLNAVIELIVDEDALIERIKKRVEEVVAVGGKIRSDDNPDSFAKRLLEYREKTVPLSKFYSNIGLLKTVDGMADIADVSRAINAILE</sequence>
<dbReference type="EC" id="2.7.4.3" evidence="1"/>
<dbReference type="EMBL" id="CP000524">
    <property type="protein sequence ID" value="ABM44844.1"/>
    <property type="molecule type" value="Genomic_DNA"/>
</dbReference>
<dbReference type="RefSeq" id="WP_005766958.1">
    <property type="nucleotide sequence ID" value="NC_008783.1"/>
</dbReference>
<dbReference type="SMR" id="A1USR5"/>
<dbReference type="STRING" id="360095.BARBAKC583_0719"/>
<dbReference type="GeneID" id="4685062"/>
<dbReference type="KEGG" id="bbk:BARBAKC583_0719"/>
<dbReference type="PATRIC" id="fig|360095.6.peg.698"/>
<dbReference type="eggNOG" id="COG0563">
    <property type="taxonomic scope" value="Bacteria"/>
</dbReference>
<dbReference type="HOGENOM" id="CLU_032354_4_1_5"/>
<dbReference type="OrthoDB" id="9805030at2"/>
<dbReference type="UniPathway" id="UPA00588">
    <property type="reaction ID" value="UER00649"/>
</dbReference>
<dbReference type="Proteomes" id="UP000000643">
    <property type="component" value="Chromosome"/>
</dbReference>
<dbReference type="GO" id="GO:0005737">
    <property type="term" value="C:cytoplasm"/>
    <property type="evidence" value="ECO:0007669"/>
    <property type="project" value="UniProtKB-SubCell"/>
</dbReference>
<dbReference type="GO" id="GO:0004017">
    <property type="term" value="F:adenylate kinase activity"/>
    <property type="evidence" value="ECO:0007669"/>
    <property type="project" value="UniProtKB-UniRule"/>
</dbReference>
<dbReference type="GO" id="GO:0005524">
    <property type="term" value="F:ATP binding"/>
    <property type="evidence" value="ECO:0007669"/>
    <property type="project" value="UniProtKB-UniRule"/>
</dbReference>
<dbReference type="GO" id="GO:0044209">
    <property type="term" value="P:AMP salvage"/>
    <property type="evidence" value="ECO:0007669"/>
    <property type="project" value="UniProtKB-UniRule"/>
</dbReference>
<dbReference type="CDD" id="cd01428">
    <property type="entry name" value="ADK"/>
    <property type="match status" value="1"/>
</dbReference>
<dbReference type="Gene3D" id="3.40.50.300">
    <property type="entry name" value="P-loop containing nucleotide triphosphate hydrolases"/>
    <property type="match status" value="1"/>
</dbReference>
<dbReference type="HAMAP" id="MF_00235">
    <property type="entry name" value="Adenylate_kinase_Adk"/>
    <property type="match status" value="1"/>
</dbReference>
<dbReference type="InterPro" id="IPR000850">
    <property type="entry name" value="Adenylat/UMP-CMP_kin"/>
</dbReference>
<dbReference type="InterPro" id="IPR033690">
    <property type="entry name" value="Adenylat_kinase_CS"/>
</dbReference>
<dbReference type="InterPro" id="IPR027417">
    <property type="entry name" value="P-loop_NTPase"/>
</dbReference>
<dbReference type="NCBIfam" id="NF001381">
    <property type="entry name" value="PRK00279.1-3"/>
    <property type="match status" value="1"/>
</dbReference>
<dbReference type="NCBIfam" id="NF011100">
    <property type="entry name" value="PRK14527.1"/>
    <property type="match status" value="1"/>
</dbReference>
<dbReference type="NCBIfam" id="NF011105">
    <property type="entry name" value="PRK14532.1"/>
    <property type="match status" value="1"/>
</dbReference>
<dbReference type="PANTHER" id="PTHR23359">
    <property type="entry name" value="NUCLEOTIDE KINASE"/>
    <property type="match status" value="1"/>
</dbReference>
<dbReference type="Pfam" id="PF00406">
    <property type="entry name" value="ADK"/>
    <property type="match status" value="1"/>
</dbReference>
<dbReference type="PRINTS" id="PR00094">
    <property type="entry name" value="ADENYLTKNASE"/>
</dbReference>
<dbReference type="SUPFAM" id="SSF52540">
    <property type="entry name" value="P-loop containing nucleoside triphosphate hydrolases"/>
    <property type="match status" value="1"/>
</dbReference>
<dbReference type="PROSITE" id="PS00113">
    <property type="entry name" value="ADENYLATE_KINASE"/>
    <property type="match status" value="1"/>
</dbReference>
<proteinExistence type="inferred from homology"/>
<gene>
    <name evidence="1" type="primary">adk</name>
    <name type="ordered locus">BARBAKC583_0719</name>
</gene>
<accession>A1USR5</accession>
<keyword id="KW-0067">ATP-binding</keyword>
<keyword id="KW-0963">Cytoplasm</keyword>
<keyword id="KW-0418">Kinase</keyword>
<keyword id="KW-0545">Nucleotide biosynthesis</keyword>
<keyword id="KW-0547">Nucleotide-binding</keyword>
<keyword id="KW-0808">Transferase</keyword>
<evidence type="ECO:0000255" key="1">
    <source>
        <dbReference type="HAMAP-Rule" id="MF_00235"/>
    </source>
</evidence>
<name>KAD_BARBK</name>
<reference key="1">
    <citation type="submission" date="2006-12" db="EMBL/GenBank/DDBJ databases">
        <authorList>
            <person name="Hendrix L."/>
            <person name="Mohamoud Y."/>
            <person name="Radune D."/>
            <person name="Shvartsbeyn A."/>
            <person name="Daugherty S."/>
            <person name="Dodson R."/>
            <person name="Durkin A.S."/>
            <person name="Harkins D."/>
            <person name="Huot H."/>
            <person name="Kothari S.P."/>
            <person name="Madupu R."/>
            <person name="Li J."/>
            <person name="Nelson W.C."/>
            <person name="Shrivastava S."/>
            <person name="Giglio M.G."/>
            <person name="Haft D."/>
            <person name="Selengut J."/>
            <person name="Fraser-Ligget C."/>
            <person name="Seshadri R."/>
        </authorList>
    </citation>
    <scope>NUCLEOTIDE SEQUENCE [LARGE SCALE GENOMIC DNA]</scope>
    <source>
        <strain>ATCC 35685 / KC583 / Herrer 020/F12,63</strain>
    </source>
</reference>
<protein>
    <recommendedName>
        <fullName evidence="1">Adenylate kinase</fullName>
        <shortName evidence="1">AK</shortName>
        <ecNumber evidence="1">2.7.4.3</ecNumber>
    </recommendedName>
    <alternativeName>
        <fullName evidence="1">ATP-AMP transphosphorylase</fullName>
    </alternativeName>
    <alternativeName>
        <fullName evidence="1">ATP:AMP phosphotransferase</fullName>
    </alternativeName>
    <alternativeName>
        <fullName evidence="1">Adenylate monophosphate kinase</fullName>
    </alternativeName>
</protein>
<feature type="chain" id="PRO_1000058787" description="Adenylate kinase">
    <location>
        <begin position="1"/>
        <end position="192"/>
    </location>
</feature>
<feature type="region of interest" description="NMP" evidence="1">
    <location>
        <begin position="30"/>
        <end position="59"/>
    </location>
</feature>
<feature type="region of interest" description="LID" evidence="1">
    <location>
        <begin position="126"/>
        <end position="142"/>
    </location>
</feature>
<feature type="binding site" evidence="1">
    <location>
        <begin position="10"/>
        <end position="15"/>
    </location>
    <ligand>
        <name>ATP</name>
        <dbReference type="ChEBI" id="CHEBI:30616"/>
    </ligand>
</feature>
<feature type="binding site" evidence="1">
    <location>
        <position position="31"/>
    </location>
    <ligand>
        <name>AMP</name>
        <dbReference type="ChEBI" id="CHEBI:456215"/>
    </ligand>
</feature>
<feature type="binding site" evidence="1">
    <location>
        <position position="36"/>
    </location>
    <ligand>
        <name>AMP</name>
        <dbReference type="ChEBI" id="CHEBI:456215"/>
    </ligand>
</feature>
<feature type="binding site" evidence="1">
    <location>
        <begin position="57"/>
        <end position="59"/>
    </location>
    <ligand>
        <name>AMP</name>
        <dbReference type="ChEBI" id="CHEBI:456215"/>
    </ligand>
</feature>
<feature type="binding site" evidence="1">
    <location>
        <begin position="85"/>
        <end position="88"/>
    </location>
    <ligand>
        <name>AMP</name>
        <dbReference type="ChEBI" id="CHEBI:456215"/>
    </ligand>
</feature>
<feature type="binding site" evidence="1">
    <location>
        <position position="92"/>
    </location>
    <ligand>
        <name>AMP</name>
        <dbReference type="ChEBI" id="CHEBI:456215"/>
    </ligand>
</feature>
<feature type="binding site" evidence="1">
    <location>
        <position position="127"/>
    </location>
    <ligand>
        <name>ATP</name>
        <dbReference type="ChEBI" id="CHEBI:30616"/>
    </ligand>
</feature>
<feature type="binding site" evidence="1">
    <location>
        <position position="139"/>
    </location>
    <ligand>
        <name>AMP</name>
        <dbReference type="ChEBI" id="CHEBI:456215"/>
    </ligand>
</feature>
<feature type="binding site" evidence="1">
    <location>
        <position position="150"/>
    </location>
    <ligand>
        <name>AMP</name>
        <dbReference type="ChEBI" id="CHEBI:456215"/>
    </ligand>
</feature>
<feature type="binding site" evidence="1">
    <location>
        <position position="178"/>
    </location>
    <ligand>
        <name>ATP</name>
        <dbReference type="ChEBI" id="CHEBI:30616"/>
    </ligand>
</feature>
<comment type="function">
    <text evidence="1">Catalyzes the reversible transfer of the terminal phosphate group between ATP and AMP. Plays an important role in cellular energy homeostasis and in adenine nucleotide metabolism.</text>
</comment>
<comment type="catalytic activity">
    <reaction evidence="1">
        <text>AMP + ATP = 2 ADP</text>
        <dbReference type="Rhea" id="RHEA:12973"/>
        <dbReference type="ChEBI" id="CHEBI:30616"/>
        <dbReference type="ChEBI" id="CHEBI:456215"/>
        <dbReference type="ChEBI" id="CHEBI:456216"/>
        <dbReference type="EC" id="2.7.4.3"/>
    </reaction>
</comment>
<comment type="pathway">
    <text evidence="1">Purine metabolism; AMP biosynthesis via salvage pathway; AMP from ADP: step 1/1.</text>
</comment>
<comment type="subunit">
    <text evidence="1">Monomer.</text>
</comment>
<comment type="subcellular location">
    <subcellularLocation>
        <location evidence="1">Cytoplasm</location>
    </subcellularLocation>
</comment>
<comment type="domain">
    <text evidence="1">Consists of three domains, a large central CORE domain and two small peripheral domains, NMPbind and LID, which undergo movements during catalysis. The LID domain closes over the site of phosphoryl transfer upon ATP binding. Assembling and dissambling the active center during each catalytic cycle provides an effective means to prevent ATP hydrolysis.</text>
</comment>
<comment type="similarity">
    <text evidence="1">Belongs to the adenylate kinase family.</text>
</comment>